<accession>Q1JAN3</accession>
<proteinExistence type="inferred from homology"/>
<feature type="chain" id="PRO_1000021346" description="Shikimate dehydrogenase (NADP(+))">
    <location>
        <begin position="1"/>
        <end position="292"/>
    </location>
</feature>
<feature type="active site" description="Proton acceptor" evidence="1">
    <location>
        <position position="73"/>
    </location>
</feature>
<feature type="binding site" evidence="1">
    <location>
        <begin position="22"/>
        <end position="24"/>
    </location>
    <ligand>
        <name>shikimate</name>
        <dbReference type="ChEBI" id="CHEBI:36208"/>
    </ligand>
</feature>
<feature type="binding site" evidence="1">
    <location>
        <position position="69"/>
    </location>
    <ligand>
        <name>shikimate</name>
        <dbReference type="ChEBI" id="CHEBI:36208"/>
    </ligand>
</feature>
<feature type="binding site" evidence="1">
    <location>
        <position position="94"/>
    </location>
    <ligand>
        <name>shikimate</name>
        <dbReference type="ChEBI" id="CHEBI:36208"/>
    </ligand>
</feature>
<feature type="binding site" evidence="1">
    <location>
        <position position="111"/>
    </location>
    <ligand>
        <name>shikimate</name>
        <dbReference type="ChEBI" id="CHEBI:36208"/>
    </ligand>
</feature>
<feature type="binding site" evidence="1">
    <location>
        <begin position="135"/>
        <end position="139"/>
    </location>
    <ligand>
        <name>NADP(+)</name>
        <dbReference type="ChEBI" id="CHEBI:58349"/>
    </ligand>
</feature>
<feature type="binding site" evidence="1">
    <location>
        <position position="236"/>
    </location>
    <ligand>
        <name>NADP(+)</name>
        <dbReference type="ChEBI" id="CHEBI:58349"/>
    </ligand>
</feature>
<feature type="binding site" evidence="1">
    <location>
        <position position="238"/>
    </location>
    <ligand>
        <name>shikimate</name>
        <dbReference type="ChEBI" id="CHEBI:36208"/>
    </ligand>
</feature>
<feature type="binding site" evidence="1">
    <location>
        <position position="260"/>
    </location>
    <ligand>
        <name>NADP(+)</name>
        <dbReference type="ChEBI" id="CHEBI:58349"/>
    </ligand>
</feature>
<comment type="function">
    <text evidence="1">Involved in the biosynthesis of the chorismate, which leads to the biosynthesis of aromatic amino acids. Catalyzes the reversible NADPH linked reduction of 3-dehydroshikimate (DHSA) to yield shikimate (SA).</text>
</comment>
<comment type="catalytic activity">
    <reaction evidence="1">
        <text>shikimate + NADP(+) = 3-dehydroshikimate + NADPH + H(+)</text>
        <dbReference type="Rhea" id="RHEA:17737"/>
        <dbReference type="ChEBI" id="CHEBI:15378"/>
        <dbReference type="ChEBI" id="CHEBI:16630"/>
        <dbReference type="ChEBI" id="CHEBI:36208"/>
        <dbReference type="ChEBI" id="CHEBI:57783"/>
        <dbReference type="ChEBI" id="CHEBI:58349"/>
        <dbReference type="EC" id="1.1.1.25"/>
    </reaction>
</comment>
<comment type="pathway">
    <text evidence="1">Metabolic intermediate biosynthesis; chorismate biosynthesis; chorismate from D-erythrose 4-phosphate and phosphoenolpyruvate: step 4/7.</text>
</comment>
<comment type="subunit">
    <text evidence="1">Homodimer.</text>
</comment>
<comment type="similarity">
    <text evidence="1">Belongs to the shikimate dehydrogenase family.</text>
</comment>
<organism>
    <name type="scientific">Streptococcus pyogenes serotype M12 (strain MGAS2096)</name>
    <dbReference type="NCBI Taxonomy" id="370553"/>
    <lineage>
        <taxon>Bacteria</taxon>
        <taxon>Bacillati</taxon>
        <taxon>Bacillota</taxon>
        <taxon>Bacilli</taxon>
        <taxon>Lactobacillales</taxon>
        <taxon>Streptococcaceae</taxon>
        <taxon>Streptococcus</taxon>
    </lineage>
</organism>
<gene>
    <name evidence="1" type="primary">aroE</name>
    <name type="ordered locus">MGAS2096_Spy1323</name>
</gene>
<keyword id="KW-0028">Amino-acid biosynthesis</keyword>
<keyword id="KW-0057">Aromatic amino acid biosynthesis</keyword>
<keyword id="KW-0521">NADP</keyword>
<keyword id="KW-0560">Oxidoreductase</keyword>
<name>AROE_STRPB</name>
<protein>
    <recommendedName>
        <fullName evidence="1">Shikimate dehydrogenase (NADP(+))</fullName>
        <shortName evidence="1">SDH</shortName>
        <ecNumber evidence="1">1.1.1.25</ecNumber>
    </recommendedName>
</protein>
<evidence type="ECO:0000255" key="1">
    <source>
        <dbReference type="HAMAP-Rule" id="MF_00222"/>
    </source>
</evidence>
<reference key="1">
    <citation type="journal article" date="2006" name="Proc. Natl. Acad. Sci. U.S.A.">
        <title>Molecular genetic anatomy of inter- and intraserotype variation in the human bacterial pathogen group A Streptococcus.</title>
        <authorList>
            <person name="Beres S.B."/>
            <person name="Richter E.W."/>
            <person name="Nagiec M.J."/>
            <person name="Sumby P."/>
            <person name="Porcella S.F."/>
            <person name="DeLeo F.R."/>
            <person name="Musser J.M."/>
        </authorList>
    </citation>
    <scope>NUCLEOTIDE SEQUENCE [LARGE SCALE GENOMIC DNA]</scope>
    <source>
        <strain>MGAS2096</strain>
    </source>
</reference>
<dbReference type="EC" id="1.1.1.25" evidence="1"/>
<dbReference type="EMBL" id="CP000261">
    <property type="protein sequence ID" value="ABF36375.1"/>
    <property type="molecule type" value="Genomic_DNA"/>
</dbReference>
<dbReference type="SMR" id="Q1JAN3"/>
<dbReference type="KEGG" id="spj:MGAS2096_Spy1323"/>
<dbReference type="HOGENOM" id="CLU_044063_4_4_9"/>
<dbReference type="UniPathway" id="UPA00053">
    <property type="reaction ID" value="UER00087"/>
</dbReference>
<dbReference type="GO" id="GO:0050661">
    <property type="term" value="F:NADP binding"/>
    <property type="evidence" value="ECO:0007669"/>
    <property type="project" value="InterPro"/>
</dbReference>
<dbReference type="GO" id="GO:0004764">
    <property type="term" value="F:shikimate 3-dehydrogenase (NADP+) activity"/>
    <property type="evidence" value="ECO:0007669"/>
    <property type="project" value="UniProtKB-UniRule"/>
</dbReference>
<dbReference type="GO" id="GO:0008652">
    <property type="term" value="P:amino acid biosynthetic process"/>
    <property type="evidence" value="ECO:0007669"/>
    <property type="project" value="UniProtKB-KW"/>
</dbReference>
<dbReference type="GO" id="GO:0009073">
    <property type="term" value="P:aromatic amino acid family biosynthetic process"/>
    <property type="evidence" value="ECO:0007669"/>
    <property type="project" value="UniProtKB-KW"/>
</dbReference>
<dbReference type="GO" id="GO:0009423">
    <property type="term" value="P:chorismate biosynthetic process"/>
    <property type="evidence" value="ECO:0007669"/>
    <property type="project" value="UniProtKB-UniRule"/>
</dbReference>
<dbReference type="GO" id="GO:0019632">
    <property type="term" value="P:shikimate metabolic process"/>
    <property type="evidence" value="ECO:0007669"/>
    <property type="project" value="InterPro"/>
</dbReference>
<dbReference type="CDD" id="cd01065">
    <property type="entry name" value="NAD_bind_Shikimate_DH"/>
    <property type="match status" value="1"/>
</dbReference>
<dbReference type="FunFam" id="3.40.50.10860:FF:000004">
    <property type="entry name" value="Quinate/shikimate dehydrogenase"/>
    <property type="match status" value="1"/>
</dbReference>
<dbReference type="FunFam" id="3.40.50.720:FF:000086">
    <property type="entry name" value="Quinate/shikimate dehydrogenase"/>
    <property type="match status" value="1"/>
</dbReference>
<dbReference type="Gene3D" id="3.40.50.10860">
    <property type="entry name" value="Leucine Dehydrogenase, chain A, domain 1"/>
    <property type="match status" value="1"/>
</dbReference>
<dbReference type="Gene3D" id="3.40.50.720">
    <property type="entry name" value="NAD(P)-binding Rossmann-like Domain"/>
    <property type="match status" value="1"/>
</dbReference>
<dbReference type="HAMAP" id="MF_00222">
    <property type="entry name" value="Shikimate_DH_AroE"/>
    <property type="match status" value="1"/>
</dbReference>
<dbReference type="InterPro" id="IPR046346">
    <property type="entry name" value="Aminoacid_DH-like_N_sf"/>
</dbReference>
<dbReference type="InterPro" id="IPR036291">
    <property type="entry name" value="NAD(P)-bd_dom_sf"/>
</dbReference>
<dbReference type="InterPro" id="IPR041121">
    <property type="entry name" value="SDH_C"/>
</dbReference>
<dbReference type="InterPro" id="IPR011342">
    <property type="entry name" value="Shikimate_DH"/>
</dbReference>
<dbReference type="InterPro" id="IPR013708">
    <property type="entry name" value="Shikimate_DH-bd_N"/>
</dbReference>
<dbReference type="InterPro" id="IPR022893">
    <property type="entry name" value="Shikimate_DH_fam"/>
</dbReference>
<dbReference type="NCBIfam" id="TIGR00507">
    <property type="entry name" value="aroE"/>
    <property type="match status" value="1"/>
</dbReference>
<dbReference type="NCBIfam" id="NF001319">
    <property type="entry name" value="PRK00258.3-3"/>
    <property type="match status" value="1"/>
</dbReference>
<dbReference type="PANTHER" id="PTHR21089:SF1">
    <property type="entry name" value="BIFUNCTIONAL 3-DEHYDROQUINATE DEHYDRATASE_SHIKIMATE DEHYDROGENASE, CHLOROPLASTIC"/>
    <property type="match status" value="1"/>
</dbReference>
<dbReference type="PANTHER" id="PTHR21089">
    <property type="entry name" value="SHIKIMATE DEHYDROGENASE"/>
    <property type="match status" value="1"/>
</dbReference>
<dbReference type="Pfam" id="PF18317">
    <property type="entry name" value="SDH_C"/>
    <property type="match status" value="1"/>
</dbReference>
<dbReference type="Pfam" id="PF08501">
    <property type="entry name" value="Shikimate_dh_N"/>
    <property type="match status" value="1"/>
</dbReference>
<dbReference type="SUPFAM" id="SSF53223">
    <property type="entry name" value="Aminoacid dehydrogenase-like, N-terminal domain"/>
    <property type="match status" value="1"/>
</dbReference>
<dbReference type="SUPFAM" id="SSF51735">
    <property type="entry name" value="NAD(P)-binding Rossmann-fold domains"/>
    <property type="match status" value="1"/>
</dbReference>
<sequence>MSERLSGHTLLVSLLATPIRHSLSPKMHNEAYAKLGLDYAYLAFEVGTEQLADAVQGIRALGIRGSNVSMPNKEAILPLLDDLSPAAELVGAVNTVVNKDGKGHLVGHITDGIGALRALADEGVSVKNKIITLAGVGGAGKAIAVQLAFDGAKEVRLFNRQATRLSSVQKLVTKLNQLTRTKVTLQDLEDQTAFKEAIRESHLFIDATSVGMKPLENLSLITDPELIRPDLVVFDIVYSPAETKLLAFARQHGAQKVINGLGMVLYQGAEAFKLITGQDMPVDAIKPLLGDE</sequence>